<comment type="function">
    <text evidence="1 7">Guanylate cyclase involved in the production of the second messenger cGMP (By similarity). Involved in the sensing of K+ gradient by the ASE right (ASER) sensory neuron (PubMed:19523832).</text>
</comment>
<comment type="catalytic activity">
    <reaction evidence="1">
        <text>GTP = 3',5'-cyclic GMP + diphosphate</text>
        <dbReference type="Rhea" id="RHEA:13665"/>
        <dbReference type="ChEBI" id="CHEBI:33019"/>
        <dbReference type="ChEBI" id="CHEBI:37565"/>
        <dbReference type="ChEBI" id="CHEBI:57746"/>
        <dbReference type="EC" id="4.6.1.2"/>
    </reaction>
</comment>
<comment type="subcellular location">
    <subcellularLocation>
        <location evidence="8">Membrane</location>
        <topology evidence="8">Single-pass type I membrane protein</topology>
    </subcellularLocation>
</comment>
<comment type="tissue specificity">
    <text evidence="6">Expressed predominantly in sensory neurons. Expressed asymmetrically in the right ASE (ASER) neuron and bilaterally in ASI and URX neurons. Expressed in PVT and bilaterally in AIY non-sensory neurons. Expressed in intestine.</text>
</comment>
<comment type="domain">
    <text evidence="4">The protein kinase domain is predicted to be catalytically inactive.</text>
</comment>
<comment type="similarity">
    <text evidence="3">Belongs to the adenylyl cyclase class-4/guanylyl cyclase family.</text>
</comment>
<organism>
    <name type="scientific">Caenorhabditis elegans</name>
    <dbReference type="NCBI Taxonomy" id="6239"/>
    <lineage>
        <taxon>Eukaryota</taxon>
        <taxon>Metazoa</taxon>
        <taxon>Ecdysozoa</taxon>
        <taxon>Nematoda</taxon>
        <taxon>Chromadorea</taxon>
        <taxon>Rhabditida</taxon>
        <taxon>Rhabditina</taxon>
        <taxon>Rhabditomorpha</taxon>
        <taxon>Rhabditoidea</taxon>
        <taxon>Rhabditidae</taxon>
        <taxon>Peloderinae</taxon>
        <taxon>Caenorhabditis</taxon>
    </lineage>
</organism>
<accession>Q09435</accession>
<reference key="1">
    <citation type="journal article" date="1998" name="Science">
        <title>Genome sequence of the nematode C. elegans: a platform for investigating biology.</title>
        <authorList>
            <consortium name="The C. elegans sequencing consortium"/>
        </authorList>
    </citation>
    <scope>NUCLEOTIDE SEQUENCE [LARGE SCALE GENOMIC DNA]</scope>
    <source>
        <strain>Bristol N2</strain>
    </source>
</reference>
<reference key="2">
    <citation type="journal article" date="2006" name="Genetics">
        <title>Searching for neuronal left/right asymmetry: genomewide analysis of nematode receptor-type guanylyl cyclases.</title>
        <authorList>
            <person name="Ortiz C.O."/>
            <person name="Etchberger J.F."/>
            <person name="Posy S.L."/>
            <person name="Frokjaer-Jensen C."/>
            <person name="Lockery S."/>
            <person name="Honig B."/>
            <person name="Hobert O."/>
        </authorList>
    </citation>
    <scope>TISSUE SPECIFICITY</scope>
</reference>
<reference key="3">
    <citation type="journal article" date="2009" name="Curr. Biol.">
        <title>Lateralized gustatory behavior of C. elegans is controlled by specific receptor-type guanylyl cyclases.</title>
        <authorList>
            <person name="Ortiz C.O."/>
            <person name="Faumont S."/>
            <person name="Takayama J."/>
            <person name="Ahmed H.K."/>
            <person name="Goldsmith A.D."/>
            <person name="Pocock R."/>
            <person name="McCormick K.E."/>
            <person name="Kunimoto H."/>
            <person name="Iino Y."/>
            <person name="Lockery S."/>
            <person name="Hobert O."/>
        </authorList>
    </citation>
    <scope>FUNCTION</scope>
</reference>
<sequence>MQIFTILLLFNIFPSIFVQNLPDTTVAPRTKRTIKIGIAAAQRIQTSSIGWSVCGGAVPLAIERLKEMGFVKDFDFEYIVDYTECDLGSVVRAGMEFIKTHKVDVIIGPPCAQALRLMSFLAENYKKPVLGWGFVSDTDLSDVIRFPHLTTVIPNSLMLGYAASKMLTTFHWNRVALLYYFSDVKYCSGVMNDIEATFNDPSTPNVNIVIKAEIYLNDNETTDNVFQTVKSRARIILWCTQTSVEKRDYLIKIATHDMIGDEYVHIMLSMRNVAFGTQTSLGKPTFSQSGLTPIWESFTEGTDGFEKMAKQAATRMFVLDVNSEVADKKYLEYMQKNIIKAVQSPPMNCSTVECMTANTTIMGGYARHLFDVVYLYGIALTHTNSTDPAVYGDVDVLVHQFVTSFQGMTGHVVISPNLTRMPIFQLYGLNSDYDQVALVDFTYTNSVMVPNVTLFYKDEGGAVWSYYGHSRPLDIPICGFLGKSCPVSFWEQYKILIFVAIAVIVLMVLIMIIGCLCVISGKRAERARINAEWQVPFAKLIESEKQVRGKGASRRSLQSAPSISTGHSGVTTVSDFCENYTMMMYEKEMVLTAKYQYTHLTKADKERFVKMRKLDHENINRFIGLSIDSAHFISVTKLCSRGSLQDILSRGNFSMDYFFMFCIIRDVAKGLEYLHKTFLRLHGNLRSATCLVNDSWQVKLAEYGMDNLVEEQTPPKKRLLWVAPEVLRGSLSVSQMEPSADIYSFAIIASEILTKKEAWDILDRKEDCEEIVYNVKKGGLFPIRPEIITDIHDVNPALIALVKDCWAEVPEDRPTAENICSQMKGLVSKQKTNLMDHVFNMLEEYTSTLEEEIEERTKELTLEKKKADILLSRMLPKQVAERLKAGQTVEPEGFDSVTVFFSDVVKFTILASKCSPFQTVNLLNDLYSNFDTIIEQHGVYKVESIGDGYLCVSGLPTRNGYAHIKQIVDMSLKFMEYCKSFNIPHLPRENVELRIGVNSGPCVAGVVGLSMPRYCLFGDTVNTASRMESNGKPSLIHLTNDAHSLLTTHYPNQYETSSRGEVIIKGKGVMETFWVHGRFGEMEPTELRSISNRSTPPVTNDRWIPNPSSSHGSRPSSVYDPLQGHQKFKMDTLKVAN</sequence>
<proteinExistence type="evidence at transcript level"/>
<name>GCY1_CAEEL</name>
<gene>
    <name type="primary">gcy-1</name>
    <name type="ORF">AH6.1</name>
</gene>
<feature type="signal peptide" evidence="2">
    <location>
        <begin position="1"/>
        <end position="18"/>
    </location>
</feature>
<feature type="chain" id="PRO_0000012388" description="Receptor-type guanylate cyclase gcy-1">
    <location>
        <begin position="19"/>
        <end position="1137"/>
    </location>
</feature>
<feature type="topological domain" description="Extracellular" evidence="2">
    <location>
        <begin position="19"/>
        <end position="494"/>
    </location>
</feature>
<feature type="transmembrane region" description="Helical" evidence="2">
    <location>
        <begin position="495"/>
        <end position="515"/>
    </location>
</feature>
<feature type="topological domain" description="Cytoplasmic" evidence="2">
    <location>
        <begin position="516"/>
        <end position="1137"/>
    </location>
</feature>
<feature type="domain" description="Protein kinase" evidence="4">
    <location>
        <begin position="557"/>
        <end position="826"/>
    </location>
</feature>
<feature type="domain" description="Guanylate cyclase" evidence="3">
    <location>
        <begin position="898"/>
        <end position="1028"/>
    </location>
</feature>
<feature type="region of interest" description="Disordered" evidence="5">
    <location>
        <begin position="1086"/>
        <end position="1122"/>
    </location>
</feature>
<feature type="coiled-coil region" evidence="2">
    <location>
        <begin position="840"/>
        <end position="871"/>
    </location>
</feature>
<feature type="compositionally biased region" description="Polar residues" evidence="5">
    <location>
        <begin position="1088"/>
        <end position="1098"/>
    </location>
</feature>
<feature type="compositionally biased region" description="Low complexity" evidence="5">
    <location>
        <begin position="1105"/>
        <end position="1117"/>
    </location>
</feature>
<feature type="glycosylation site" description="N-linked (GlcNAc...) asparagine" evidence="2">
    <location>
        <position position="219"/>
    </location>
</feature>
<feature type="glycosylation site" description="N-linked (GlcNAc...) asparagine" evidence="2">
    <location>
        <position position="348"/>
    </location>
</feature>
<feature type="glycosylation site" description="N-linked (GlcNAc...) asparagine" evidence="2">
    <location>
        <position position="358"/>
    </location>
</feature>
<feature type="glycosylation site" description="N-linked (GlcNAc...) asparagine" evidence="2">
    <location>
        <position position="384"/>
    </location>
</feature>
<feature type="glycosylation site" description="N-linked (GlcNAc...) asparagine" evidence="2">
    <location>
        <position position="417"/>
    </location>
</feature>
<feature type="glycosylation site" description="N-linked (GlcNAc...) asparagine" evidence="2">
    <location>
        <position position="451"/>
    </location>
</feature>
<evidence type="ECO:0000250" key="1">
    <source>
        <dbReference type="UniProtKB" id="Q19187"/>
    </source>
</evidence>
<evidence type="ECO:0000255" key="2"/>
<evidence type="ECO:0000255" key="3">
    <source>
        <dbReference type="PROSITE-ProRule" id="PRU00099"/>
    </source>
</evidence>
<evidence type="ECO:0000255" key="4">
    <source>
        <dbReference type="PROSITE-ProRule" id="PRU00159"/>
    </source>
</evidence>
<evidence type="ECO:0000256" key="5">
    <source>
        <dbReference type="SAM" id="MobiDB-lite"/>
    </source>
</evidence>
<evidence type="ECO:0000269" key="6">
    <source>
    </source>
</evidence>
<evidence type="ECO:0000269" key="7">
    <source>
    </source>
</evidence>
<evidence type="ECO:0000305" key="8"/>
<keyword id="KW-0141">cGMP biosynthesis</keyword>
<keyword id="KW-0145">Chemotaxis</keyword>
<keyword id="KW-0175">Coiled coil</keyword>
<keyword id="KW-0325">Glycoprotein</keyword>
<keyword id="KW-0342">GTP-binding</keyword>
<keyword id="KW-0456">Lyase</keyword>
<keyword id="KW-0472">Membrane</keyword>
<keyword id="KW-0547">Nucleotide-binding</keyword>
<keyword id="KW-0675">Receptor</keyword>
<keyword id="KW-1185">Reference proteome</keyword>
<keyword id="KW-0732">Signal</keyword>
<keyword id="KW-0812">Transmembrane</keyword>
<keyword id="KW-1133">Transmembrane helix</keyword>
<dbReference type="EC" id="4.6.1.2" evidence="1"/>
<dbReference type="EMBL" id="Z48009">
    <property type="protein sequence ID" value="CAA88089.1"/>
    <property type="molecule type" value="Genomic_DNA"/>
</dbReference>
<dbReference type="PIR" id="T18625">
    <property type="entry name" value="T18625"/>
</dbReference>
<dbReference type="RefSeq" id="NP_496039.1">
    <property type="nucleotide sequence ID" value="NM_063638.1"/>
</dbReference>
<dbReference type="SMR" id="Q09435"/>
<dbReference type="FunCoup" id="Q09435">
    <property type="interactions" value="112"/>
</dbReference>
<dbReference type="STRING" id="6239.AH6.1.1"/>
<dbReference type="GlyCosmos" id="Q09435">
    <property type="glycosylation" value="6 sites, No reported glycans"/>
</dbReference>
<dbReference type="PaxDb" id="6239-AH6.1"/>
<dbReference type="EnsemblMetazoa" id="AH6.1.1">
    <property type="protein sequence ID" value="AH6.1.1"/>
    <property type="gene ID" value="WBGene00001528"/>
</dbReference>
<dbReference type="GeneID" id="191639"/>
<dbReference type="KEGG" id="cel:CELE_AH6.1"/>
<dbReference type="UCSC" id="AH6.1">
    <property type="organism name" value="c. elegans"/>
</dbReference>
<dbReference type="AGR" id="WB:WBGene00001528"/>
<dbReference type="CTD" id="191639"/>
<dbReference type="WormBase" id="AH6.1">
    <property type="protein sequence ID" value="CE01450"/>
    <property type="gene ID" value="WBGene00001528"/>
    <property type="gene designation" value="gcy-1"/>
</dbReference>
<dbReference type="eggNOG" id="KOG1023">
    <property type="taxonomic scope" value="Eukaryota"/>
</dbReference>
<dbReference type="GeneTree" id="ENSGT00970000196185"/>
<dbReference type="HOGENOM" id="CLU_001072_1_3_1"/>
<dbReference type="InParanoid" id="Q09435"/>
<dbReference type="OMA" id="IVEYTEC"/>
<dbReference type="OrthoDB" id="5855204at2759"/>
<dbReference type="PhylomeDB" id="Q09435"/>
<dbReference type="Reactome" id="R-CEL-2514859">
    <property type="pathway name" value="Inactivation, recovery and regulation of the phototransduction cascade"/>
</dbReference>
<dbReference type="PRO" id="PR:Q09435"/>
<dbReference type="Proteomes" id="UP000001940">
    <property type="component" value="Chromosome II"/>
</dbReference>
<dbReference type="GO" id="GO:0005886">
    <property type="term" value="C:plasma membrane"/>
    <property type="evidence" value="ECO:0000318"/>
    <property type="project" value="GO_Central"/>
</dbReference>
<dbReference type="GO" id="GO:0005524">
    <property type="term" value="F:ATP binding"/>
    <property type="evidence" value="ECO:0007669"/>
    <property type="project" value="InterPro"/>
</dbReference>
<dbReference type="GO" id="GO:0005525">
    <property type="term" value="F:GTP binding"/>
    <property type="evidence" value="ECO:0007669"/>
    <property type="project" value="UniProtKB-KW"/>
</dbReference>
<dbReference type="GO" id="GO:0004383">
    <property type="term" value="F:guanylate cyclase activity"/>
    <property type="evidence" value="ECO:0000318"/>
    <property type="project" value="GO_Central"/>
</dbReference>
<dbReference type="GO" id="GO:0001653">
    <property type="term" value="F:peptide receptor activity"/>
    <property type="evidence" value="ECO:0000318"/>
    <property type="project" value="GO_Central"/>
</dbReference>
<dbReference type="GO" id="GO:0004672">
    <property type="term" value="F:protein kinase activity"/>
    <property type="evidence" value="ECO:0007669"/>
    <property type="project" value="InterPro"/>
</dbReference>
<dbReference type="GO" id="GO:0006182">
    <property type="term" value="P:cGMP biosynthetic process"/>
    <property type="evidence" value="ECO:0000318"/>
    <property type="project" value="GO_Central"/>
</dbReference>
<dbReference type="GO" id="GO:0007635">
    <property type="term" value="P:chemosensory behavior"/>
    <property type="evidence" value="ECO:0000315"/>
    <property type="project" value="UniProtKB"/>
</dbReference>
<dbReference type="GO" id="GO:0006935">
    <property type="term" value="P:chemotaxis"/>
    <property type="evidence" value="ECO:0000315"/>
    <property type="project" value="UniProtKB"/>
</dbReference>
<dbReference type="GO" id="GO:0035556">
    <property type="term" value="P:intracellular signal transduction"/>
    <property type="evidence" value="ECO:0007669"/>
    <property type="project" value="InterPro"/>
</dbReference>
<dbReference type="GO" id="GO:0007168">
    <property type="term" value="P:receptor guanylyl cyclase signaling pathway"/>
    <property type="evidence" value="ECO:0000318"/>
    <property type="project" value="GO_Central"/>
</dbReference>
<dbReference type="GO" id="GO:0010226">
    <property type="term" value="P:response to lithium ion"/>
    <property type="evidence" value="ECO:0000315"/>
    <property type="project" value="UniProtKB"/>
</dbReference>
<dbReference type="GO" id="GO:0035864">
    <property type="term" value="P:response to potassium ion"/>
    <property type="evidence" value="ECO:0000315"/>
    <property type="project" value="UniProtKB"/>
</dbReference>
<dbReference type="GO" id="GO:1902074">
    <property type="term" value="P:response to salt"/>
    <property type="evidence" value="ECO:0000315"/>
    <property type="project" value="UniProtKB"/>
</dbReference>
<dbReference type="CDD" id="cd07302">
    <property type="entry name" value="CHD"/>
    <property type="match status" value="1"/>
</dbReference>
<dbReference type="CDD" id="cd06352">
    <property type="entry name" value="PBP1_NPR_GC-like"/>
    <property type="match status" value="1"/>
</dbReference>
<dbReference type="FunFam" id="3.30.70.1230:FF:000023">
    <property type="entry name" value="Guanylate cyclase"/>
    <property type="match status" value="1"/>
</dbReference>
<dbReference type="FunFam" id="3.40.50.2300:FF:000447">
    <property type="entry name" value="Receptor-type guanylate cyclase gcy-19"/>
    <property type="match status" value="1"/>
</dbReference>
<dbReference type="FunFam" id="1.10.510.10:FF:001114">
    <property type="entry name" value="Receptor-type guanylate cyclase gcy-4"/>
    <property type="match status" value="1"/>
</dbReference>
<dbReference type="Gene3D" id="3.40.50.2300">
    <property type="match status" value="2"/>
</dbReference>
<dbReference type="Gene3D" id="6.10.250.780">
    <property type="match status" value="1"/>
</dbReference>
<dbReference type="Gene3D" id="3.30.70.1230">
    <property type="entry name" value="Nucleotide cyclase"/>
    <property type="match status" value="1"/>
</dbReference>
<dbReference type="Gene3D" id="1.10.510.10">
    <property type="entry name" value="Transferase(Phosphotransferase) domain 1"/>
    <property type="match status" value="1"/>
</dbReference>
<dbReference type="InterPro" id="IPR001054">
    <property type="entry name" value="A/G_cyclase"/>
</dbReference>
<dbReference type="InterPro" id="IPR018297">
    <property type="entry name" value="A/G_cyclase_CS"/>
</dbReference>
<dbReference type="InterPro" id="IPR001828">
    <property type="entry name" value="ANF_lig-bd_rcpt"/>
</dbReference>
<dbReference type="InterPro" id="IPR050401">
    <property type="entry name" value="Cyclic_nucleotide_synthase"/>
</dbReference>
<dbReference type="InterPro" id="IPR011009">
    <property type="entry name" value="Kinase-like_dom_sf"/>
</dbReference>
<dbReference type="InterPro" id="IPR029787">
    <property type="entry name" value="Nucleotide_cyclase"/>
</dbReference>
<dbReference type="InterPro" id="IPR028082">
    <property type="entry name" value="Peripla_BP_I"/>
</dbReference>
<dbReference type="InterPro" id="IPR000719">
    <property type="entry name" value="Prot_kinase_dom"/>
</dbReference>
<dbReference type="InterPro" id="IPR001245">
    <property type="entry name" value="Ser-Thr/Tyr_kinase_cat_dom"/>
</dbReference>
<dbReference type="PANTHER" id="PTHR11920">
    <property type="entry name" value="GUANYLYL CYCLASE"/>
    <property type="match status" value="1"/>
</dbReference>
<dbReference type="PANTHER" id="PTHR11920:SF265">
    <property type="entry name" value="RECEPTOR-TYPE GUANYLATE CYCLASE GCY-1-RELATED"/>
    <property type="match status" value="1"/>
</dbReference>
<dbReference type="Pfam" id="PF01094">
    <property type="entry name" value="ANF_receptor"/>
    <property type="match status" value="1"/>
</dbReference>
<dbReference type="Pfam" id="PF00211">
    <property type="entry name" value="Guanylate_cyc"/>
    <property type="match status" value="1"/>
</dbReference>
<dbReference type="Pfam" id="PF07714">
    <property type="entry name" value="PK_Tyr_Ser-Thr"/>
    <property type="match status" value="1"/>
</dbReference>
<dbReference type="SMART" id="SM00044">
    <property type="entry name" value="CYCc"/>
    <property type="match status" value="1"/>
</dbReference>
<dbReference type="SUPFAM" id="SSF55073">
    <property type="entry name" value="Nucleotide cyclase"/>
    <property type="match status" value="1"/>
</dbReference>
<dbReference type="SUPFAM" id="SSF53822">
    <property type="entry name" value="Periplasmic binding protein-like I"/>
    <property type="match status" value="1"/>
</dbReference>
<dbReference type="SUPFAM" id="SSF56112">
    <property type="entry name" value="Protein kinase-like (PK-like)"/>
    <property type="match status" value="1"/>
</dbReference>
<dbReference type="PROSITE" id="PS00452">
    <property type="entry name" value="GUANYLATE_CYCLASE_1"/>
    <property type="match status" value="1"/>
</dbReference>
<dbReference type="PROSITE" id="PS50125">
    <property type="entry name" value="GUANYLATE_CYCLASE_2"/>
    <property type="match status" value="1"/>
</dbReference>
<dbReference type="PROSITE" id="PS50011">
    <property type="entry name" value="PROTEIN_KINASE_DOM"/>
    <property type="match status" value="1"/>
</dbReference>
<protein>
    <recommendedName>
        <fullName evidence="8">Receptor-type guanylate cyclase gcy-1</fullName>
        <ecNumber evidence="1">4.6.1.2</ecNumber>
    </recommendedName>
</protein>